<evidence type="ECO:0000255" key="1">
    <source>
        <dbReference type="HAMAP-Rule" id="MF_01521"/>
    </source>
</evidence>
<name>MNTP_XANAC</name>
<protein>
    <recommendedName>
        <fullName evidence="1">Putative manganese efflux pump MntP</fullName>
    </recommendedName>
</protein>
<proteinExistence type="inferred from homology"/>
<keyword id="KW-0997">Cell inner membrane</keyword>
<keyword id="KW-1003">Cell membrane</keyword>
<keyword id="KW-0406">Ion transport</keyword>
<keyword id="KW-0464">Manganese</keyword>
<keyword id="KW-0472">Membrane</keyword>
<keyword id="KW-0812">Transmembrane</keyword>
<keyword id="KW-1133">Transmembrane helix</keyword>
<keyword id="KW-0813">Transport</keyword>
<accession>Q8PEZ6</accession>
<sequence length="194" mass="19909">MSPFSIVLIGFAMSTDAFAAAIGKGAAMRKPQWRDALRAGLIFGCIEAITPVIGWLLGRAAASYVSAYDHWIAFVLLGALGTHMIVAGLRNGPEDAEDAASDTPKRHGVLGLATTGFATSIDAMAVGVSLAFLDVHIGVVAVVVGLCTFSMVTAGVMLGRALGNLIGKRAEMLGGLILVIVGSVILYEHLSGAG</sequence>
<dbReference type="EMBL" id="AE008923">
    <property type="protein sequence ID" value="AAM39027.1"/>
    <property type="molecule type" value="Genomic_DNA"/>
</dbReference>
<dbReference type="RefSeq" id="WP_005930599.1">
    <property type="nucleotide sequence ID" value="NC_003919.1"/>
</dbReference>
<dbReference type="KEGG" id="xac:XAC4192"/>
<dbReference type="eggNOG" id="COG1971">
    <property type="taxonomic scope" value="Bacteria"/>
</dbReference>
<dbReference type="HOGENOM" id="CLU_096410_0_0_6"/>
<dbReference type="Proteomes" id="UP000000576">
    <property type="component" value="Chromosome"/>
</dbReference>
<dbReference type="GO" id="GO:0005886">
    <property type="term" value="C:plasma membrane"/>
    <property type="evidence" value="ECO:0007669"/>
    <property type="project" value="UniProtKB-SubCell"/>
</dbReference>
<dbReference type="GO" id="GO:0005384">
    <property type="term" value="F:manganese ion transmembrane transporter activity"/>
    <property type="evidence" value="ECO:0007669"/>
    <property type="project" value="UniProtKB-UniRule"/>
</dbReference>
<dbReference type="HAMAP" id="MF_01521">
    <property type="entry name" value="MntP_pump"/>
    <property type="match status" value="1"/>
</dbReference>
<dbReference type="InterPro" id="IPR003810">
    <property type="entry name" value="Mntp/YtaF"/>
</dbReference>
<dbReference type="InterPro" id="IPR022929">
    <property type="entry name" value="Put_MntP"/>
</dbReference>
<dbReference type="PANTHER" id="PTHR35529">
    <property type="entry name" value="MANGANESE EFFLUX PUMP MNTP-RELATED"/>
    <property type="match status" value="1"/>
</dbReference>
<dbReference type="PANTHER" id="PTHR35529:SF1">
    <property type="entry name" value="MANGANESE EFFLUX PUMP MNTP-RELATED"/>
    <property type="match status" value="1"/>
</dbReference>
<dbReference type="Pfam" id="PF02659">
    <property type="entry name" value="Mntp"/>
    <property type="match status" value="1"/>
</dbReference>
<comment type="function">
    <text evidence="1">Probably functions as a manganese efflux pump.</text>
</comment>
<comment type="subcellular location">
    <subcellularLocation>
        <location evidence="1">Cell inner membrane</location>
        <topology evidence="1">Multi-pass membrane protein</topology>
    </subcellularLocation>
</comment>
<comment type="similarity">
    <text evidence="1">Belongs to the MntP (TC 9.B.29) family.</text>
</comment>
<gene>
    <name evidence="1" type="primary">mntP</name>
    <name type="ordered locus">XAC4192</name>
</gene>
<feature type="chain" id="PRO_0000155670" description="Putative manganese efflux pump MntP">
    <location>
        <begin position="1"/>
        <end position="194"/>
    </location>
</feature>
<feature type="transmembrane region" description="Helical" evidence="1">
    <location>
        <begin position="3"/>
        <end position="23"/>
    </location>
</feature>
<feature type="transmembrane region" description="Helical" evidence="1">
    <location>
        <begin position="37"/>
        <end position="57"/>
    </location>
</feature>
<feature type="transmembrane region" description="Helical" evidence="1">
    <location>
        <begin position="69"/>
        <end position="89"/>
    </location>
</feature>
<feature type="transmembrane region" description="Helical" evidence="1">
    <location>
        <begin position="110"/>
        <end position="132"/>
    </location>
</feature>
<feature type="transmembrane region" description="Helical" evidence="1">
    <location>
        <begin position="147"/>
        <end position="167"/>
    </location>
</feature>
<feature type="transmembrane region" description="Helical" evidence="1">
    <location>
        <begin position="172"/>
        <end position="192"/>
    </location>
</feature>
<reference key="1">
    <citation type="journal article" date="2002" name="Nature">
        <title>Comparison of the genomes of two Xanthomonas pathogens with differing host specificities.</title>
        <authorList>
            <person name="da Silva A.C.R."/>
            <person name="Ferro J.A."/>
            <person name="Reinach F.C."/>
            <person name="Farah C.S."/>
            <person name="Furlan L.R."/>
            <person name="Quaggio R.B."/>
            <person name="Monteiro-Vitorello C.B."/>
            <person name="Van Sluys M.A."/>
            <person name="Almeida N.F. Jr."/>
            <person name="Alves L.M.C."/>
            <person name="do Amaral A.M."/>
            <person name="Bertolini M.C."/>
            <person name="Camargo L.E.A."/>
            <person name="Camarotte G."/>
            <person name="Cannavan F."/>
            <person name="Cardozo J."/>
            <person name="Chambergo F."/>
            <person name="Ciapina L.P."/>
            <person name="Cicarelli R.M.B."/>
            <person name="Coutinho L.L."/>
            <person name="Cursino-Santos J.R."/>
            <person name="El-Dorry H."/>
            <person name="Faria J.B."/>
            <person name="Ferreira A.J.S."/>
            <person name="Ferreira R.C.C."/>
            <person name="Ferro M.I.T."/>
            <person name="Formighieri E.F."/>
            <person name="Franco M.C."/>
            <person name="Greggio C.C."/>
            <person name="Gruber A."/>
            <person name="Katsuyama A.M."/>
            <person name="Kishi L.T."/>
            <person name="Leite R.P."/>
            <person name="Lemos E.G.M."/>
            <person name="Lemos M.V.F."/>
            <person name="Locali E.C."/>
            <person name="Machado M.A."/>
            <person name="Madeira A.M.B.N."/>
            <person name="Martinez-Rossi N.M."/>
            <person name="Martins E.C."/>
            <person name="Meidanis J."/>
            <person name="Menck C.F.M."/>
            <person name="Miyaki C.Y."/>
            <person name="Moon D.H."/>
            <person name="Moreira L.M."/>
            <person name="Novo M.T.M."/>
            <person name="Okura V.K."/>
            <person name="Oliveira M.C."/>
            <person name="Oliveira V.R."/>
            <person name="Pereira H.A."/>
            <person name="Rossi A."/>
            <person name="Sena J.A.D."/>
            <person name="Silva C."/>
            <person name="de Souza R.F."/>
            <person name="Spinola L.A.F."/>
            <person name="Takita M.A."/>
            <person name="Tamura R.E."/>
            <person name="Teixeira E.C."/>
            <person name="Tezza R.I.D."/>
            <person name="Trindade dos Santos M."/>
            <person name="Truffi D."/>
            <person name="Tsai S.M."/>
            <person name="White F.F."/>
            <person name="Setubal J.C."/>
            <person name="Kitajima J.P."/>
        </authorList>
    </citation>
    <scope>NUCLEOTIDE SEQUENCE [LARGE SCALE GENOMIC DNA]</scope>
    <source>
        <strain>306</strain>
    </source>
</reference>
<organism>
    <name type="scientific">Xanthomonas axonopodis pv. citri (strain 306)</name>
    <dbReference type="NCBI Taxonomy" id="190486"/>
    <lineage>
        <taxon>Bacteria</taxon>
        <taxon>Pseudomonadati</taxon>
        <taxon>Pseudomonadota</taxon>
        <taxon>Gammaproteobacteria</taxon>
        <taxon>Lysobacterales</taxon>
        <taxon>Lysobacteraceae</taxon>
        <taxon>Xanthomonas</taxon>
    </lineage>
</organism>